<feature type="chain" id="PRO_1000133356" description="Anaerobic glycerol-3-phosphate dehydrogenase subunit B">
    <location>
        <begin position="1"/>
        <end position="419"/>
    </location>
</feature>
<organism>
    <name type="scientific">Escherichia coli O157:H7 (strain EC4115 / EHEC)</name>
    <dbReference type="NCBI Taxonomy" id="444450"/>
    <lineage>
        <taxon>Bacteria</taxon>
        <taxon>Pseudomonadati</taxon>
        <taxon>Pseudomonadota</taxon>
        <taxon>Gammaproteobacteria</taxon>
        <taxon>Enterobacterales</taxon>
        <taxon>Enterobacteriaceae</taxon>
        <taxon>Escherichia</taxon>
    </lineage>
</organism>
<reference key="1">
    <citation type="journal article" date="2011" name="Proc. Natl. Acad. Sci. U.S.A.">
        <title>Genomic anatomy of Escherichia coli O157:H7 outbreaks.</title>
        <authorList>
            <person name="Eppinger M."/>
            <person name="Mammel M.K."/>
            <person name="Leclerc J.E."/>
            <person name="Ravel J."/>
            <person name="Cebula T.A."/>
        </authorList>
    </citation>
    <scope>NUCLEOTIDE SEQUENCE [LARGE SCALE GENOMIC DNA]</scope>
    <source>
        <strain>EC4115 / EHEC</strain>
    </source>
</reference>
<gene>
    <name evidence="1" type="primary">glpB</name>
    <name type="ordered locus">ECH74115_3379</name>
</gene>
<comment type="function">
    <text evidence="1">Conversion of glycerol 3-phosphate to dihydroxyacetone. Uses fumarate or nitrate as electron acceptor.</text>
</comment>
<comment type="catalytic activity">
    <reaction evidence="1">
        <text>a quinone + sn-glycerol 3-phosphate = dihydroxyacetone phosphate + a quinol</text>
        <dbReference type="Rhea" id="RHEA:18977"/>
        <dbReference type="ChEBI" id="CHEBI:24646"/>
        <dbReference type="ChEBI" id="CHEBI:57597"/>
        <dbReference type="ChEBI" id="CHEBI:57642"/>
        <dbReference type="ChEBI" id="CHEBI:132124"/>
        <dbReference type="EC" id="1.1.5.3"/>
    </reaction>
</comment>
<comment type="cofactor">
    <cofactor evidence="1">
        <name>FMN</name>
        <dbReference type="ChEBI" id="CHEBI:58210"/>
    </cofactor>
</comment>
<comment type="pathway">
    <text evidence="1">Polyol metabolism; glycerol degradation via glycerol kinase pathway; glycerone phosphate from sn-glycerol 3-phosphate (anaerobic route): step 1/1.</text>
</comment>
<comment type="subunit">
    <text evidence="1">Composed of a catalytic GlpA/B dimer and of membrane bound GlpC.</text>
</comment>
<comment type="similarity">
    <text evidence="1">Belongs to the anaerobic G-3-P dehydrogenase subunit B family.</text>
</comment>
<keyword id="KW-0285">Flavoprotein</keyword>
<keyword id="KW-0288">FMN</keyword>
<keyword id="KW-0560">Oxidoreductase</keyword>
<evidence type="ECO:0000255" key="1">
    <source>
        <dbReference type="HAMAP-Rule" id="MF_00753"/>
    </source>
</evidence>
<dbReference type="EC" id="1.1.5.3" evidence="1"/>
<dbReference type="EMBL" id="CP001164">
    <property type="protein sequence ID" value="ACI36262.1"/>
    <property type="molecule type" value="Genomic_DNA"/>
</dbReference>
<dbReference type="RefSeq" id="WP_001209872.1">
    <property type="nucleotide sequence ID" value="NC_011353.1"/>
</dbReference>
<dbReference type="KEGG" id="ecf:ECH74115_3379"/>
<dbReference type="HOGENOM" id="CLU_047793_0_0_6"/>
<dbReference type="UniPathway" id="UPA00618">
    <property type="reaction ID" value="UER00673"/>
</dbReference>
<dbReference type="GO" id="GO:0009331">
    <property type="term" value="C:glycerol-3-phosphate dehydrogenase (FAD) complex"/>
    <property type="evidence" value="ECO:0007669"/>
    <property type="project" value="InterPro"/>
</dbReference>
<dbReference type="GO" id="GO:0004368">
    <property type="term" value="F:glycerol-3-phosphate dehydrogenase (quinone) activity"/>
    <property type="evidence" value="ECO:0007669"/>
    <property type="project" value="UniProtKB-UniRule"/>
</dbReference>
<dbReference type="GO" id="GO:0009061">
    <property type="term" value="P:anaerobic respiration"/>
    <property type="evidence" value="ECO:0007669"/>
    <property type="project" value="TreeGrafter"/>
</dbReference>
<dbReference type="GO" id="GO:0019563">
    <property type="term" value="P:glycerol catabolic process"/>
    <property type="evidence" value="ECO:0007669"/>
    <property type="project" value="UniProtKB-UniRule"/>
</dbReference>
<dbReference type="GO" id="GO:0046168">
    <property type="term" value="P:glycerol-3-phosphate catabolic process"/>
    <property type="evidence" value="ECO:0007669"/>
    <property type="project" value="TreeGrafter"/>
</dbReference>
<dbReference type="Gene3D" id="3.50.50.60">
    <property type="entry name" value="FAD/NAD(P)-binding domain"/>
    <property type="match status" value="1"/>
</dbReference>
<dbReference type="HAMAP" id="MF_00753">
    <property type="entry name" value="Glycerol3P_GlpB"/>
    <property type="match status" value="1"/>
</dbReference>
<dbReference type="InterPro" id="IPR003953">
    <property type="entry name" value="FAD-dep_OxRdtase_2_FAD-bd"/>
</dbReference>
<dbReference type="InterPro" id="IPR050315">
    <property type="entry name" value="FAD-oxidoreductase_2"/>
</dbReference>
<dbReference type="InterPro" id="IPR036188">
    <property type="entry name" value="FAD/NAD-bd_sf"/>
</dbReference>
<dbReference type="InterPro" id="IPR009158">
    <property type="entry name" value="G3P_DH_GlpB_su"/>
</dbReference>
<dbReference type="NCBIfam" id="TIGR03378">
    <property type="entry name" value="glycerol3P_GlpB"/>
    <property type="match status" value="1"/>
</dbReference>
<dbReference type="NCBIfam" id="NF003718">
    <property type="entry name" value="PRK05329.1-1"/>
    <property type="match status" value="1"/>
</dbReference>
<dbReference type="NCBIfam" id="NF003719">
    <property type="entry name" value="PRK05329.1-2"/>
    <property type="match status" value="1"/>
</dbReference>
<dbReference type="NCBIfam" id="NF003720">
    <property type="entry name" value="PRK05329.1-3"/>
    <property type="match status" value="1"/>
</dbReference>
<dbReference type="PANTHER" id="PTHR43400:SF11">
    <property type="entry name" value="ANAEROBIC GLYCEROL-3-PHOSPHATE DEHYDROGENASE SUBUNIT B"/>
    <property type="match status" value="1"/>
</dbReference>
<dbReference type="PANTHER" id="PTHR43400">
    <property type="entry name" value="FUMARATE REDUCTASE"/>
    <property type="match status" value="1"/>
</dbReference>
<dbReference type="Pfam" id="PF00890">
    <property type="entry name" value="FAD_binding_2"/>
    <property type="match status" value="1"/>
</dbReference>
<dbReference type="PIRSF" id="PIRSF000141">
    <property type="entry name" value="Anaerobic_G3P_dh"/>
    <property type="match status" value="1"/>
</dbReference>
<dbReference type="SUPFAM" id="SSF51905">
    <property type="entry name" value="FAD/NAD(P)-binding domain"/>
    <property type="match status" value="1"/>
</dbReference>
<name>GLPB_ECO5E</name>
<accession>B5YX30</accession>
<proteinExistence type="inferred from homology"/>
<sequence>MRFDTIIMGGGLAGLLCGLQLQKHGLRCAIVTRGQSALHFSSGSLDLLSHLPDGQAVTDIHSGLESLRQQAPAHPYSLLGPQRVLDLACQAQALIAESGAQLQGSVELPHQRITPLGTLRSTWLSSPEVPVWPLPAKKICVVGISGLMDFQAHLAAASLRELDLAVETAEIELPELDVLRNNATEFRAVNIARFLDNEENWPLLLDALIPVANTCEMILMPACFGLADDKLWRWLNEKLPCSLMLLPTLPPSVLGIRLQNQLQRQFVRQGGVWMPGDEVKKVTCKNGVVNEIWTRNHADIPLRPRFAVLASGSFFSGGLVAERNGIREPILGLDVLQTATRGEWYKGDFFAPQPWQQFGVTTDQTLRPSQAGQTIENLFTIGSVLGGFDPIAQGCGGGVCAVSALHAAQQIAQRAGGQQ</sequence>
<protein>
    <recommendedName>
        <fullName evidence="1">Anaerobic glycerol-3-phosphate dehydrogenase subunit B</fullName>
        <shortName evidence="1">Anaerobic G-3-P dehydrogenase subunit B</shortName>
        <shortName evidence="1">Anaerobic G3Pdhase B</shortName>
        <ecNumber evidence="1">1.1.5.3</ecNumber>
    </recommendedName>
</protein>